<organism>
    <name type="scientific">Xenopus tropicalis</name>
    <name type="common">Western clawed frog</name>
    <name type="synonym">Silurana tropicalis</name>
    <dbReference type="NCBI Taxonomy" id="8364"/>
    <lineage>
        <taxon>Eukaryota</taxon>
        <taxon>Metazoa</taxon>
        <taxon>Chordata</taxon>
        <taxon>Craniata</taxon>
        <taxon>Vertebrata</taxon>
        <taxon>Euteleostomi</taxon>
        <taxon>Amphibia</taxon>
        <taxon>Batrachia</taxon>
        <taxon>Anura</taxon>
        <taxon>Pipoidea</taxon>
        <taxon>Pipidae</taxon>
        <taxon>Xenopodinae</taxon>
        <taxon>Xenopus</taxon>
        <taxon>Silurana</taxon>
    </lineage>
</organism>
<accession>Q5XH94</accession>
<gene>
    <name type="primary">timm23</name>
    <name type="synonym">timm23b</name>
</gene>
<name>TIM23_XENTR</name>
<sequence>MDTNHPGSAGGRGGLGSIFGGGSPGYSHSDLAGVPLTGMSPLSPYLNVDPRYLVQDNDEFILPTGANKTRGRFELAFFTIGGCCMSGAAFGAVNGLRLGFKETQNMAWSKPKNVQILNMVTRQGALWANTLGSLALLYSAFGVIIEKTRGAEDDLNTIAAGTMTGMLYKSTGGLRGVARGGLAGLALTSAFALYNNWEHIKGSSSRLSL</sequence>
<reference key="1">
    <citation type="submission" date="2004-10" db="EMBL/GenBank/DDBJ databases">
        <authorList>
            <consortium name="NIH - Xenopus Gene Collection (XGC) project"/>
        </authorList>
    </citation>
    <scope>NUCLEOTIDE SEQUENCE [LARGE SCALE MRNA]</scope>
    <source>
        <tissue>Embryo</tissue>
    </source>
</reference>
<evidence type="ECO:0000250" key="1">
    <source>
        <dbReference type="UniProtKB" id="O14925"/>
    </source>
</evidence>
<evidence type="ECO:0000255" key="2"/>
<evidence type="ECO:0000305" key="3"/>
<keyword id="KW-0472">Membrane</keyword>
<keyword id="KW-0496">Mitochondrion</keyword>
<keyword id="KW-0999">Mitochondrion inner membrane</keyword>
<keyword id="KW-0653">Protein transport</keyword>
<keyword id="KW-1185">Reference proteome</keyword>
<keyword id="KW-0811">Translocation</keyword>
<keyword id="KW-0812">Transmembrane</keyword>
<keyword id="KW-1133">Transmembrane helix</keyword>
<keyword id="KW-0813">Transport</keyword>
<proteinExistence type="evidence at transcript level"/>
<dbReference type="EMBL" id="BC084178">
    <property type="protein sequence ID" value="AAH84178.1"/>
    <property type="molecule type" value="mRNA"/>
</dbReference>
<dbReference type="RefSeq" id="NP_001011053.1">
    <property type="nucleotide sequence ID" value="NM_001011053.1"/>
</dbReference>
<dbReference type="SMR" id="Q5XH94"/>
<dbReference type="FunCoup" id="Q5XH94">
    <property type="interactions" value="1745"/>
</dbReference>
<dbReference type="STRING" id="8364.ENSXETP00000025017"/>
<dbReference type="PaxDb" id="8364-ENSXETP00000055332"/>
<dbReference type="DNASU" id="496463"/>
<dbReference type="GeneID" id="496463"/>
<dbReference type="KEGG" id="xtr:496463"/>
<dbReference type="AGR" id="Xenbase:XB-GENE-994532"/>
<dbReference type="CTD" id="100287932"/>
<dbReference type="Xenbase" id="XB-GENE-994532">
    <property type="gene designation" value="timm23"/>
</dbReference>
<dbReference type="eggNOG" id="KOG3324">
    <property type="taxonomic scope" value="Eukaryota"/>
</dbReference>
<dbReference type="InParanoid" id="Q5XH94"/>
<dbReference type="OMA" id="DNDNIWS"/>
<dbReference type="OrthoDB" id="159299at2759"/>
<dbReference type="Reactome" id="R-XTR-1268020">
    <property type="pathway name" value="Mitochondrial protein import"/>
</dbReference>
<dbReference type="Proteomes" id="UP000008143">
    <property type="component" value="Chromosome 7"/>
</dbReference>
<dbReference type="Bgee" id="ENSXETG00000026175">
    <property type="expression patterns" value="Expressed in egg cell and 22 other cell types or tissues"/>
</dbReference>
<dbReference type="ExpressionAtlas" id="Q5XH94">
    <property type="expression patterns" value="differential"/>
</dbReference>
<dbReference type="GO" id="GO:0005744">
    <property type="term" value="C:TIM23 mitochondrial import inner membrane translocase complex"/>
    <property type="evidence" value="ECO:0007669"/>
    <property type="project" value="InterPro"/>
</dbReference>
<dbReference type="GO" id="GO:0008320">
    <property type="term" value="F:protein transmembrane transporter activity"/>
    <property type="evidence" value="ECO:0007669"/>
    <property type="project" value="InterPro"/>
</dbReference>
<dbReference type="GO" id="GO:0030150">
    <property type="term" value="P:protein import into mitochondrial matrix"/>
    <property type="evidence" value="ECO:0007669"/>
    <property type="project" value="InterPro"/>
</dbReference>
<dbReference type="InterPro" id="IPR005681">
    <property type="entry name" value="Tim23"/>
</dbReference>
<dbReference type="InterPro" id="IPR045238">
    <property type="entry name" value="Tim23-like"/>
</dbReference>
<dbReference type="NCBIfam" id="TIGR00983">
    <property type="entry name" value="3a0801s02tim23"/>
    <property type="match status" value="1"/>
</dbReference>
<dbReference type="PANTHER" id="PTHR15371:SF39">
    <property type="entry name" value="MITOCHONDRIAL IMPORT INNER MEMBRANE TRANSLOCASE SUBUNIT TIM23"/>
    <property type="match status" value="1"/>
</dbReference>
<dbReference type="PANTHER" id="PTHR15371">
    <property type="entry name" value="TIM23"/>
    <property type="match status" value="1"/>
</dbReference>
<dbReference type="Pfam" id="PF02466">
    <property type="entry name" value="Tim17"/>
    <property type="match status" value="1"/>
</dbReference>
<feature type="chain" id="PRO_0000354677" description="Mitochondrial import inner membrane translocase subunit Tim23">
    <location>
        <begin position="1"/>
        <end position="209"/>
    </location>
</feature>
<feature type="transmembrane region" description="Helical" evidence="2">
    <location>
        <begin position="73"/>
        <end position="93"/>
    </location>
</feature>
<feature type="transmembrane region" description="Helical" evidence="2">
    <location>
        <begin position="125"/>
        <end position="145"/>
    </location>
</feature>
<feature type="transmembrane region" description="Helical" evidence="2">
    <location>
        <begin position="180"/>
        <end position="200"/>
    </location>
</feature>
<comment type="function">
    <text evidence="1">Essential component of the TIM23 complex, a complex that mediates the translocation of transit peptide-containing proteins across the mitochondrial inner membrane.</text>
</comment>
<comment type="subunit">
    <text evidence="1">Component of the TIM23 complex at least composed of timm23, timm17 and timm50. The complex interacts with the timm44 component of the PAM complex (By similarity).</text>
</comment>
<comment type="subcellular location">
    <subcellularLocation>
        <location evidence="1">Mitochondrion inner membrane</location>
        <topology evidence="2">Multi-pass membrane protein</topology>
    </subcellularLocation>
</comment>
<comment type="similarity">
    <text evidence="3">Belongs to the Tim17/Tim22/Tim23 family.</text>
</comment>
<protein>
    <recommendedName>
        <fullName>Mitochondrial import inner membrane translocase subunit Tim23</fullName>
    </recommendedName>
</protein>